<reference key="1">
    <citation type="journal article" date="2004" name="PLoS Biol.">
        <title>Phylogenomics of the reproductive parasite Wolbachia pipientis wMel: a streamlined genome overrun by mobile genetic elements.</title>
        <authorList>
            <person name="Wu M."/>
            <person name="Sun L.V."/>
            <person name="Vamathevan J.J."/>
            <person name="Riegler M."/>
            <person name="DeBoy R.T."/>
            <person name="Brownlie J.C."/>
            <person name="McGraw E.A."/>
            <person name="Martin W."/>
            <person name="Esser C."/>
            <person name="Ahmadinejad N."/>
            <person name="Wiegand C."/>
            <person name="Madupu R."/>
            <person name="Beanan M.J."/>
            <person name="Brinkac L.M."/>
            <person name="Daugherty S.C."/>
            <person name="Durkin A.S."/>
            <person name="Kolonay J.F."/>
            <person name="Nelson W.C."/>
            <person name="Mohamoud Y."/>
            <person name="Lee P."/>
            <person name="Berry K.J."/>
            <person name="Young M.B."/>
            <person name="Utterback T.R."/>
            <person name="Weidman J.F."/>
            <person name="Nierman W.C."/>
            <person name="Paulsen I.T."/>
            <person name="Nelson K.E."/>
            <person name="Tettelin H."/>
            <person name="O'Neill S.L."/>
            <person name="Eisen J.A."/>
        </authorList>
    </citation>
    <scope>NUCLEOTIDE SEQUENCE [LARGE SCALE GENOMIC DNA]</scope>
</reference>
<gene>
    <name evidence="1" type="primary">miaA</name>
    <name type="ordered locus">WD_0822</name>
</gene>
<organism>
    <name type="scientific">Wolbachia pipientis wMel</name>
    <dbReference type="NCBI Taxonomy" id="163164"/>
    <lineage>
        <taxon>Bacteria</taxon>
        <taxon>Pseudomonadati</taxon>
        <taxon>Pseudomonadota</taxon>
        <taxon>Alphaproteobacteria</taxon>
        <taxon>Rickettsiales</taxon>
        <taxon>Anaplasmataceae</taxon>
        <taxon>Wolbachieae</taxon>
        <taxon>Wolbachia</taxon>
    </lineage>
</organism>
<sequence length="297" mass="34020">MKNNIVIITGITASGKSELCDNLREKYGNISIINCDSKQVYKEIPIITAQPLKQEEFYKLYGYVSAKENYSVGLWLEDLEKEVNHALENAQIPIITGGSGLYISSFIKGLSSMPQISQEVRKNVSELRKNLSKEEFYKLVLSKDSKVQDKICINDSHRLSRALEVITETGKTIFVWQENRQPPLFDNFKIYTILPKREDVYQKINSRFIKMIENGAIDEVKKLLSMNLAPNLPAMKAHGVPEIVKYLKGEITLDEAIQIAQTNTRHYAKRQYTWFKNQFPSSEVIDCANELTALEIF</sequence>
<accession>Q73GV7</accession>
<keyword id="KW-0067">ATP-binding</keyword>
<keyword id="KW-0460">Magnesium</keyword>
<keyword id="KW-0547">Nucleotide-binding</keyword>
<keyword id="KW-0808">Transferase</keyword>
<keyword id="KW-0819">tRNA processing</keyword>
<protein>
    <recommendedName>
        <fullName evidence="1">tRNA dimethylallyltransferase</fullName>
        <ecNumber evidence="1">2.5.1.75</ecNumber>
    </recommendedName>
    <alternativeName>
        <fullName evidence="1">Dimethylallyl diphosphate:tRNA dimethylallyltransferase</fullName>
        <shortName evidence="1">DMAPP:tRNA dimethylallyltransferase</shortName>
        <shortName evidence="1">DMATase</shortName>
    </alternativeName>
    <alternativeName>
        <fullName evidence="1">Isopentenyl-diphosphate:tRNA isopentenyltransferase</fullName>
        <shortName evidence="1">IPP transferase</shortName>
        <shortName evidence="1">IPPT</shortName>
        <shortName evidence="1">IPTase</shortName>
    </alternativeName>
</protein>
<comment type="function">
    <text evidence="1">Catalyzes the transfer of a dimethylallyl group onto the adenine at position 37 in tRNAs that read codons beginning with uridine, leading to the formation of N6-(dimethylallyl)adenosine (i(6)A).</text>
</comment>
<comment type="catalytic activity">
    <reaction evidence="1">
        <text>adenosine(37) in tRNA + dimethylallyl diphosphate = N(6)-dimethylallyladenosine(37) in tRNA + diphosphate</text>
        <dbReference type="Rhea" id="RHEA:26482"/>
        <dbReference type="Rhea" id="RHEA-COMP:10162"/>
        <dbReference type="Rhea" id="RHEA-COMP:10375"/>
        <dbReference type="ChEBI" id="CHEBI:33019"/>
        <dbReference type="ChEBI" id="CHEBI:57623"/>
        <dbReference type="ChEBI" id="CHEBI:74411"/>
        <dbReference type="ChEBI" id="CHEBI:74415"/>
        <dbReference type="EC" id="2.5.1.75"/>
    </reaction>
</comment>
<comment type="cofactor">
    <cofactor evidence="1">
        <name>Mg(2+)</name>
        <dbReference type="ChEBI" id="CHEBI:18420"/>
    </cofactor>
</comment>
<comment type="subunit">
    <text evidence="1">Monomer.</text>
</comment>
<comment type="similarity">
    <text evidence="1">Belongs to the IPP transferase family.</text>
</comment>
<dbReference type="EC" id="2.5.1.75" evidence="1"/>
<dbReference type="EMBL" id="AE017196">
    <property type="protein sequence ID" value="AAS14509.1"/>
    <property type="molecule type" value="Genomic_DNA"/>
</dbReference>
<dbReference type="RefSeq" id="WP_010082478.1">
    <property type="nucleotide sequence ID" value="NZ_OX384529.1"/>
</dbReference>
<dbReference type="SMR" id="Q73GV7"/>
<dbReference type="EnsemblBacteria" id="AAS14509">
    <property type="protein sequence ID" value="AAS14509"/>
    <property type="gene ID" value="WD_0822"/>
</dbReference>
<dbReference type="GeneID" id="70036297"/>
<dbReference type="KEGG" id="wol:WD_0822"/>
<dbReference type="eggNOG" id="COG0324">
    <property type="taxonomic scope" value="Bacteria"/>
</dbReference>
<dbReference type="Proteomes" id="UP000008215">
    <property type="component" value="Chromosome"/>
</dbReference>
<dbReference type="GO" id="GO:0005524">
    <property type="term" value="F:ATP binding"/>
    <property type="evidence" value="ECO:0007669"/>
    <property type="project" value="UniProtKB-UniRule"/>
</dbReference>
<dbReference type="GO" id="GO:0052381">
    <property type="term" value="F:tRNA dimethylallyltransferase activity"/>
    <property type="evidence" value="ECO:0007669"/>
    <property type="project" value="UniProtKB-UniRule"/>
</dbReference>
<dbReference type="GO" id="GO:0006400">
    <property type="term" value="P:tRNA modification"/>
    <property type="evidence" value="ECO:0007669"/>
    <property type="project" value="TreeGrafter"/>
</dbReference>
<dbReference type="Gene3D" id="1.10.20.140">
    <property type="match status" value="1"/>
</dbReference>
<dbReference type="Gene3D" id="3.40.50.300">
    <property type="entry name" value="P-loop containing nucleotide triphosphate hydrolases"/>
    <property type="match status" value="1"/>
</dbReference>
<dbReference type="HAMAP" id="MF_00185">
    <property type="entry name" value="IPP_trans"/>
    <property type="match status" value="1"/>
</dbReference>
<dbReference type="InterPro" id="IPR039657">
    <property type="entry name" value="Dimethylallyltransferase"/>
</dbReference>
<dbReference type="InterPro" id="IPR018022">
    <property type="entry name" value="IPT"/>
</dbReference>
<dbReference type="InterPro" id="IPR027417">
    <property type="entry name" value="P-loop_NTPase"/>
</dbReference>
<dbReference type="NCBIfam" id="TIGR00174">
    <property type="entry name" value="miaA"/>
    <property type="match status" value="1"/>
</dbReference>
<dbReference type="PANTHER" id="PTHR11088">
    <property type="entry name" value="TRNA DIMETHYLALLYLTRANSFERASE"/>
    <property type="match status" value="1"/>
</dbReference>
<dbReference type="PANTHER" id="PTHR11088:SF60">
    <property type="entry name" value="TRNA DIMETHYLALLYLTRANSFERASE"/>
    <property type="match status" value="1"/>
</dbReference>
<dbReference type="Pfam" id="PF01715">
    <property type="entry name" value="IPPT"/>
    <property type="match status" value="1"/>
</dbReference>
<dbReference type="SUPFAM" id="SSF52540">
    <property type="entry name" value="P-loop containing nucleoside triphosphate hydrolases"/>
    <property type="match status" value="1"/>
</dbReference>
<evidence type="ECO:0000255" key="1">
    <source>
        <dbReference type="HAMAP-Rule" id="MF_00185"/>
    </source>
</evidence>
<name>MIAA_WOLPM</name>
<proteinExistence type="inferred from homology"/>
<feature type="chain" id="PRO_0000377369" description="tRNA dimethylallyltransferase">
    <location>
        <begin position="1"/>
        <end position="297"/>
    </location>
</feature>
<feature type="region of interest" description="Interaction with substrate tRNA" evidence="1">
    <location>
        <begin position="36"/>
        <end position="39"/>
    </location>
</feature>
<feature type="binding site" evidence="1">
    <location>
        <begin position="10"/>
        <end position="17"/>
    </location>
    <ligand>
        <name>ATP</name>
        <dbReference type="ChEBI" id="CHEBI:30616"/>
    </ligand>
</feature>
<feature type="binding site" evidence="1">
    <location>
        <begin position="12"/>
        <end position="17"/>
    </location>
    <ligand>
        <name>substrate</name>
    </ligand>
</feature>
<feature type="site" description="Interaction with substrate tRNA" evidence="1">
    <location>
        <position position="99"/>
    </location>
</feature>
<feature type="site" description="Interaction with substrate tRNA" evidence="1">
    <location>
        <position position="121"/>
    </location>
</feature>